<dbReference type="EMBL" id="AABR03040177">
    <property type="status" value="NOT_ANNOTATED_CDS"/>
    <property type="molecule type" value="Genomic_DNA"/>
</dbReference>
<dbReference type="EMBL" id="BC089922">
    <property type="protein sequence ID" value="AAH89922.1"/>
    <property type="molecule type" value="mRNA"/>
</dbReference>
<dbReference type="RefSeq" id="NP_001257913.1">
    <molecule id="Q5FVK6-1"/>
    <property type="nucleotide sequence ID" value="NM_001270984.1"/>
</dbReference>
<dbReference type="SMR" id="Q5FVK6"/>
<dbReference type="FunCoup" id="Q5FVK6">
    <property type="interactions" value="3527"/>
</dbReference>
<dbReference type="STRING" id="10116.ENSRNOP00000011670"/>
<dbReference type="GlyGen" id="Q5FVK6">
    <property type="glycosylation" value="1 site"/>
</dbReference>
<dbReference type="iPTMnet" id="Q5FVK6"/>
<dbReference type="PhosphoSitePlus" id="Q5FVK6"/>
<dbReference type="jPOST" id="Q5FVK6"/>
<dbReference type="PaxDb" id="10116-ENSRNOP00000011670"/>
<dbReference type="Ensembl" id="ENSRNOT00000011670.8">
    <molecule id="Q5FVK6-1"/>
    <property type="protein sequence ID" value="ENSRNOP00000011670.5"/>
    <property type="gene ID" value="ENSRNOG00000008634.8"/>
</dbReference>
<dbReference type="GeneID" id="313478"/>
<dbReference type="KEGG" id="rno:313478"/>
<dbReference type="UCSC" id="RGD:1306630">
    <molecule id="Q5FVK6-1"/>
    <property type="organism name" value="rat"/>
</dbReference>
<dbReference type="AGR" id="RGD:1306630"/>
<dbReference type="CTD" id="200014"/>
<dbReference type="RGD" id="1306630">
    <property type="gene designation" value="Cc2d1b"/>
</dbReference>
<dbReference type="eggNOG" id="KOG3837">
    <property type="taxonomic scope" value="Eukaryota"/>
</dbReference>
<dbReference type="GeneTree" id="ENSGT00390000009595"/>
<dbReference type="HOGENOM" id="CLU_008808_1_0_1"/>
<dbReference type="InParanoid" id="Q5FVK6"/>
<dbReference type="OMA" id="NNNCPEY"/>
<dbReference type="OrthoDB" id="84006at9989"/>
<dbReference type="PhylomeDB" id="Q5FVK6"/>
<dbReference type="TreeFam" id="TF314229"/>
<dbReference type="Reactome" id="R-RNO-9668328">
    <property type="pathway name" value="Sealing of the nuclear envelope (NE) by ESCRT-III"/>
</dbReference>
<dbReference type="PRO" id="PR:Q5FVK6"/>
<dbReference type="Proteomes" id="UP000002494">
    <property type="component" value="Chromosome 5"/>
</dbReference>
<dbReference type="Bgee" id="ENSRNOG00000008634">
    <property type="expression patterns" value="Expressed in skeletal muscle tissue and 19 other cell types or tissues"/>
</dbReference>
<dbReference type="GO" id="GO:0005829">
    <property type="term" value="C:cytosol"/>
    <property type="evidence" value="ECO:0000266"/>
    <property type="project" value="RGD"/>
</dbReference>
<dbReference type="GO" id="GO:0010008">
    <property type="term" value="C:endosome membrane"/>
    <property type="evidence" value="ECO:0000266"/>
    <property type="project" value="RGD"/>
</dbReference>
<dbReference type="GO" id="GO:0005654">
    <property type="term" value="C:nucleoplasm"/>
    <property type="evidence" value="ECO:0007669"/>
    <property type="project" value="Ensembl"/>
</dbReference>
<dbReference type="GO" id="GO:0005634">
    <property type="term" value="C:nucleus"/>
    <property type="evidence" value="ECO:0000314"/>
    <property type="project" value="MGI"/>
</dbReference>
<dbReference type="GO" id="GO:0000981">
    <property type="term" value="F:DNA-binding transcription factor activity, RNA polymerase II-specific"/>
    <property type="evidence" value="ECO:0000318"/>
    <property type="project" value="GO_Central"/>
</dbReference>
<dbReference type="GO" id="GO:0001227">
    <property type="term" value="F:DNA-binding transcription repressor activity, RNA polymerase II-specific"/>
    <property type="evidence" value="ECO:0000266"/>
    <property type="project" value="RGD"/>
</dbReference>
<dbReference type="GO" id="GO:0000978">
    <property type="term" value="F:RNA polymerase II cis-regulatory region sequence-specific DNA binding"/>
    <property type="evidence" value="ECO:0000266"/>
    <property type="project" value="RGD"/>
</dbReference>
<dbReference type="GO" id="GO:0000122">
    <property type="term" value="P:negative regulation of transcription by RNA polymerase II"/>
    <property type="evidence" value="ECO:0000266"/>
    <property type="project" value="RGD"/>
</dbReference>
<dbReference type="GO" id="GO:0006357">
    <property type="term" value="P:regulation of transcription by RNA polymerase II"/>
    <property type="evidence" value="ECO:0000318"/>
    <property type="project" value="GO_Central"/>
</dbReference>
<dbReference type="CDD" id="cd08690">
    <property type="entry name" value="C2_Freud-1"/>
    <property type="match status" value="1"/>
</dbReference>
<dbReference type="FunFam" id="2.60.40.150:FF:000104">
    <property type="entry name" value="coiled-coil and C2 domain-containing protein 1B"/>
    <property type="match status" value="1"/>
</dbReference>
<dbReference type="Gene3D" id="2.60.40.150">
    <property type="entry name" value="C2 domain"/>
    <property type="match status" value="1"/>
</dbReference>
<dbReference type="InterPro" id="IPR000008">
    <property type="entry name" value="C2_dom"/>
</dbReference>
<dbReference type="InterPro" id="IPR035892">
    <property type="entry name" value="C2_domain_sf"/>
</dbReference>
<dbReference type="InterPro" id="IPR037772">
    <property type="entry name" value="C2_Freud"/>
</dbReference>
<dbReference type="InterPro" id="IPR039725">
    <property type="entry name" value="CC2D1A/B"/>
</dbReference>
<dbReference type="InterPro" id="IPR006608">
    <property type="entry name" value="CC2D1A/B_DM14"/>
</dbReference>
<dbReference type="PANTHER" id="PTHR13076">
    <property type="entry name" value="COILED-COIL AND C2 DOMAIN-CONTAINING PROTEIN 1-LIKE"/>
    <property type="match status" value="1"/>
</dbReference>
<dbReference type="PANTHER" id="PTHR13076:SF5">
    <property type="entry name" value="COILED-COIL AND C2 DOMAIN-CONTAINING PROTEIN 1B"/>
    <property type="match status" value="1"/>
</dbReference>
<dbReference type="Pfam" id="PF00168">
    <property type="entry name" value="C2"/>
    <property type="match status" value="1"/>
</dbReference>
<dbReference type="Pfam" id="PF21528">
    <property type="entry name" value="CC2D1A-B_DM14"/>
    <property type="match status" value="4"/>
</dbReference>
<dbReference type="SMART" id="SM00239">
    <property type="entry name" value="C2"/>
    <property type="match status" value="1"/>
</dbReference>
<dbReference type="SMART" id="SM00685">
    <property type="entry name" value="DM14"/>
    <property type="match status" value="4"/>
</dbReference>
<dbReference type="SUPFAM" id="SSF49562">
    <property type="entry name" value="C2 domain (Calcium/lipid-binding domain, CaLB)"/>
    <property type="match status" value="1"/>
</dbReference>
<dbReference type="PROSITE" id="PS50004">
    <property type="entry name" value="C2"/>
    <property type="match status" value="1"/>
</dbReference>
<accession>Q5FVK6</accession>
<reference key="1">
    <citation type="journal article" date="2004" name="Nature">
        <title>Genome sequence of the Brown Norway rat yields insights into mammalian evolution.</title>
        <authorList>
            <person name="Gibbs R.A."/>
            <person name="Weinstock G.M."/>
            <person name="Metzker M.L."/>
            <person name="Muzny D.M."/>
            <person name="Sodergren E.J."/>
            <person name="Scherer S."/>
            <person name="Scott G."/>
            <person name="Steffen D."/>
            <person name="Worley K.C."/>
            <person name="Burch P.E."/>
            <person name="Okwuonu G."/>
            <person name="Hines S."/>
            <person name="Lewis L."/>
            <person name="Deramo C."/>
            <person name="Delgado O."/>
            <person name="Dugan-Rocha S."/>
            <person name="Miner G."/>
            <person name="Morgan M."/>
            <person name="Hawes A."/>
            <person name="Gill R."/>
            <person name="Holt R.A."/>
            <person name="Adams M.D."/>
            <person name="Amanatides P.G."/>
            <person name="Baden-Tillson H."/>
            <person name="Barnstead M."/>
            <person name="Chin S."/>
            <person name="Evans C.A."/>
            <person name="Ferriera S."/>
            <person name="Fosler C."/>
            <person name="Glodek A."/>
            <person name="Gu Z."/>
            <person name="Jennings D."/>
            <person name="Kraft C.L."/>
            <person name="Nguyen T."/>
            <person name="Pfannkoch C.M."/>
            <person name="Sitter C."/>
            <person name="Sutton G.G."/>
            <person name="Venter J.C."/>
            <person name="Woodage T."/>
            <person name="Smith D."/>
            <person name="Lee H.-M."/>
            <person name="Gustafson E."/>
            <person name="Cahill P."/>
            <person name="Kana A."/>
            <person name="Doucette-Stamm L."/>
            <person name="Weinstock K."/>
            <person name="Fechtel K."/>
            <person name="Weiss R.B."/>
            <person name="Dunn D.M."/>
            <person name="Green E.D."/>
            <person name="Blakesley R.W."/>
            <person name="Bouffard G.G."/>
            <person name="De Jong P.J."/>
            <person name="Osoegawa K."/>
            <person name="Zhu B."/>
            <person name="Marra M."/>
            <person name="Schein J."/>
            <person name="Bosdet I."/>
            <person name="Fjell C."/>
            <person name="Jones S."/>
            <person name="Krzywinski M."/>
            <person name="Mathewson C."/>
            <person name="Siddiqui A."/>
            <person name="Wye N."/>
            <person name="McPherson J."/>
            <person name="Zhao S."/>
            <person name="Fraser C.M."/>
            <person name="Shetty J."/>
            <person name="Shatsman S."/>
            <person name="Geer K."/>
            <person name="Chen Y."/>
            <person name="Abramzon S."/>
            <person name="Nierman W.C."/>
            <person name="Havlak P.H."/>
            <person name="Chen R."/>
            <person name="Durbin K.J."/>
            <person name="Egan A."/>
            <person name="Ren Y."/>
            <person name="Song X.-Z."/>
            <person name="Li B."/>
            <person name="Liu Y."/>
            <person name="Qin X."/>
            <person name="Cawley S."/>
            <person name="Cooney A.J."/>
            <person name="D'Souza L.M."/>
            <person name="Martin K."/>
            <person name="Wu J.Q."/>
            <person name="Gonzalez-Garay M.L."/>
            <person name="Jackson A.R."/>
            <person name="Kalafus K.J."/>
            <person name="McLeod M.P."/>
            <person name="Milosavljevic A."/>
            <person name="Virk D."/>
            <person name="Volkov A."/>
            <person name="Wheeler D.A."/>
            <person name="Zhang Z."/>
            <person name="Bailey J.A."/>
            <person name="Eichler E.E."/>
            <person name="Tuzun E."/>
            <person name="Birney E."/>
            <person name="Mongin E."/>
            <person name="Ureta-Vidal A."/>
            <person name="Woodwark C."/>
            <person name="Zdobnov E."/>
            <person name="Bork P."/>
            <person name="Suyama M."/>
            <person name="Torrents D."/>
            <person name="Alexandersson M."/>
            <person name="Trask B.J."/>
            <person name="Young J.M."/>
            <person name="Huang H."/>
            <person name="Wang H."/>
            <person name="Xing H."/>
            <person name="Daniels S."/>
            <person name="Gietzen D."/>
            <person name="Schmidt J."/>
            <person name="Stevens K."/>
            <person name="Vitt U."/>
            <person name="Wingrove J."/>
            <person name="Camara F."/>
            <person name="Mar Alba M."/>
            <person name="Abril J.F."/>
            <person name="Guigo R."/>
            <person name="Smit A."/>
            <person name="Dubchak I."/>
            <person name="Rubin E.M."/>
            <person name="Couronne O."/>
            <person name="Poliakov A."/>
            <person name="Huebner N."/>
            <person name="Ganten D."/>
            <person name="Goesele C."/>
            <person name="Hummel O."/>
            <person name="Kreitler T."/>
            <person name="Lee Y.-A."/>
            <person name="Monti J."/>
            <person name="Schulz H."/>
            <person name="Zimdahl H."/>
            <person name="Himmelbauer H."/>
            <person name="Lehrach H."/>
            <person name="Jacob H.J."/>
            <person name="Bromberg S."/>
            <person name="Gullings-Handley J."/>
            <person name="Jensen-Seaman M.I."/>
            <person name="Kwitek A.E."/>
            <person name="Lazar J."/>
            <person name="Pasko D."/>
            <person name="Tonellato P.J."/>
            <person name="Twigger S."/>
            <person name="Ponting C.P."/>
            <person name="Duarte J.M."/>
            <person name="Rice S."/>
            <person name="Goodstadt L."/>
            <person name="Beatson S.A."/>
            <person name="Emes R.D."/>
            <person name="Winter E.E."/>
            <person name="Webber C."/>
            <person name="Brandt P."/>
            <person name="Nyakatura G."/>
            <person name="Adetobi M."/>
            <person name="Chiaromonte F."/>
            <person name="Elnitski L."/>
            <person name="Eswara P."/>
            <person name="Hardison R.C."/>
            <person name="Hou M."/>
            <person name="Kolbe D."/>
            <person name="Makova K."/>
            <person name="Miller W."/>
            <person name="Nekrutenko A."/>
            <person name="Riemer C."/>
            <person name="Schwartz S."/>
            <person name="Taylor J."/>
            <person name="Yang S."/>
            <person name="Zhang Y."/>
            <person name="Lindpaintner K."/>
            <person name="Andrews T.D."/>
            <person name="Caccamo M."/>
            <person name="Clamp M."/>
            <person name="Clarke L."/>
            <person name="Curwen V."/>
            <person name="Durbin R.M."/>
            <person name="Eyras E."/>
            <person name="Searle S.M."/>
            <person name="Cooper G.M."/>
            <person name="Batzoglou S."/>
            <person name="Brudno M."/>
            <person name="Sidow A."/>
            <person name="Stone E.A."/>
            <person name="Payseur B.A."/>
            <person name="Bourque G."/>
            <person name="Lopez-Otin C."/>
            <person name="Puente X.S."/>
            <person name="Chakrabarti K."/>
            <person name="Chatterji S."/>
            <person name="Dewey C."/>
            <person name="Pachter L."/>
            <person name="Bray N."/>
            <person name="Yap V.B."/>
            <person name="Caspi A."/>
            <person name="Tesler G."/>
            <person name="Pevzner P.A."/>
            <person name="Haussler D."/>
            <person name="Roskin K.M."/>
            <person name="Baertsch R."/>
            <person name="Clawson H."/>
            <person name="Furey T.S."/>
            <person name="Hinrichs A.S."/>
            <person name="Karolchik D."/>
            <person name="Kent W.J."/>
            <person name="Rosenbloom K.R."/>
            <person name="Trumbower H."/>
            <person name="Weirauch M."/>
            <person name="Cooper D.N."/>
            <person name="Stenson P.D."/>
            <person name="Ma B."/>
            <person name="Brent M."/>
            <person name="Arumugam M."/>
            <person name="Shteynberg D."/>
            <person name="Copley R.R."/>
            <person name="Taylor M.S."/>
            <person name="Riethman H."/>
            <person name="Mudunuri U."/>
            <person name="Peterson J."/>
            <person name="Guyer M."/>
            <person name="Felsenfeld A."/>
            <person name="Old S."/>
            <person name="Mockrin S."/>
            <person name="Collins F.S."/>
        </authorList>
    </citation>
    <scope>NUCLEOTIDE SEQUENCE [LARGE SCALE GENOMIC DNA]</scope>
    <source>
        <strain>Brown Norway</strain>
    </source>
</reference>
<reference key="2">
    <citation type="journal article" date="2004" name="Genome Res.">
        <title>The status, quality, and expansion of the NIH full-length cDNA project: the Mammalian Gene Collection (MGC).</title>
        <authorList>
            <consortium name="The MGC Project Team"/>
        </authorList>
    </citation>
    <scope>NUCLEOTIDE SEQUENCE [LARGE SCALE MRNA] (ISOFORM 2)</scope>
    <source>
        <tissue>Ovary</tissue>
    </source>
</reference>
<reference key="3">
    <citation type="journal article" date="2011" name="J. Androl.">
        <title>Differential proteomics leads to identification of domain specific epididymal sperm proteins.</title>
        <authorList>
            <person name="Suryawanshi A.R."/>
            <person name="Khan S.A."/>
            <person name="Gajbhiye R.K."/>
            <person name="Gurav M.Y."/>
            <person name="Khole V.V."/>
        </authorList>
    </citation>
    <scope>IDENTIFICATION BY MASS SPECTROMETRY</scope>
    <scope>TISSUE SPECIFICITY</scope>
    <scope>MASS SPECTROMETRY</scope>
    <source>
        <strain>Holtzman</strain>
        <tissue>Sperm</tissue>
    </source>
</reference>
<feature type="chain" id="PRO_0000288428" description="Coiled-coil and C2 domain-containing protein 1B">
    <location>
        <begin position="1"/>
        <end position="850"/>
    </location>
</feature>
<feature type="domain" description="C2" evidence="5">
    <location>
        <begin position="668"/>
        <end position="807"/>
    </location>
</feature>
<feature type="region of interest" description="Disordered" evidence="6">
    <location>
        <begin position="1"/>
        <end position="21"/>
    </location>
</feature>
<feature type="region of interest" description="Disordered" evidence="6">
    <location>
        <begin position="54"/>
        <end position="73"/>
    </location>
</feature>
<feature type="region of interest" description="Disordered" evidence="6">
    <location>
        <begin position="114"/>
        <end position="145"/>
    </location>
</feature>
<feature type="region of interest" description="Disordered" evidence="6">
    <location>
        <begin position="215"/>
        <end position="277"/>
    </location>
</feature>
<feature type="region of interest" description="Disordered" evidence="6">
    <location>
        <begin position="436"/>
        <end position="525"/>
    </location>
</feature>
<feature type="coiled-coil region" evidence="4">
    <location>
        <begin position="167"/>
        <end position="213"/>
    </location>
</feature>
<feature type="compositionally biased region" description="Basic residues" evidence="6">
    <location>
        <begin position="1"/>
        <end position="10"/>
    </location>
</feature>
<feature type="compositionally biased region" description="Acidic residues" evidence="6">
    <location>
        <begin position="114"/>
        <end position="129"/>
    </location>
</feature>
<feature type="compositionally biased region" description="Basic and acidic residues" evidence="6">
    <location>
        <begin position="234"/>
        <end position="244"/>
    </location>
</feature>
<feature type="compositionally biased region" description="Pro residues" evidence="6">
    <location>
        <begin position="440"/>
        <end position="450"/>
    </location>
</feature>
<feature type="compositionally biased region" description="Low complexity" evidence="6">
    <location>
        <begin position="489"/>
        <end position="502"/>
    </location>
</feature>
<feature type="compositionally biased region" description="Low complexity" evidence="6">
    <location>
        <begin position="511"/>
        <end position="524"/>
    </location>
</feature>
<feature type="modified residue" description="Phosphoserine" evidence="3">
    <location>
        <position position="585"/>
    </location>
</feature>
<feature type="modified residue" description="Phosphothreonine" evidence="3">
    <location>
        <position position="588"/>
    </location>
</feature>
<feature type="splice variant" id="VSP_025664" description="In isoform 2." evidence="8">
    <location>
        <begin position="1"/>
        <end position="692"/>
    </location>
</feature>
<gene>
    <name type="primary">Cc2d1b</name>
</gene>
<name>C2D1B_RAT</name>
<comment type="function">
    <text evidence="1">Transcription factor that binds specifically to the DRE (dual repressor element) and represses HTR1A gene transcription in neuronal cells.</text>
</comment>
<comment type="subunit">
    <text evidence="2">Interacts with CHMP4B.</text>
</comment>
<comment type="subcellular location">
    <subcellularLocation>
        <location evidence="1">Nucleus</location>
    </subcellularLocation>
</comment>
<comment type="alternative products">
    <event type="alternative splicing"/>
    <isoform>
        <id>Q5FVK6-1</id>
        <name>1</name>
        <sequence type="displayed"/>
    </isoform>
    <isoform>
        <id>Q5FVK6-2</id>
        <name>2</name>
        <sequence type="described" ref="VSP_025664"/>
    </isoform>
</comment>
<comment type="tissue specificity">
    <text evidence="7">Expressed in epididymal sperm but not in testicular sperm (at protein level).</text>
</comment>
<comment type="mass spectrometry" mass="93476.08" method="MALDI" evidence="7"/>
<comment type="similarity">
    <text evidence="9">Belongs to the CC2D1 family.</text>
</comment>
<keyword id="KW-0025">Alternative splicing</keyword>
<keyword id="KW-0175">Coiled coil</keyword>
<keyword id="KW-0539">Nucleus</keyword>
<keyword id="KW-0597">Phosphoprotein</keyword>
<keyword id="KW-1185">Reference proteome</keyword>
<keyword id="KW-0804">Transcription</keyword>
<keyword id="KW-0805">Transcription regulation</keyword>
<protein>
    <recommendedName>
        <fullName>Coiled-coil and C2 domain-containing protein 1B</fullName>
    </recommendedName>
    <alternativeName>
        <fullName>Five prime repressor element under dual repression-binding protein 2</fullName>
        <shortName>FRE under dual repression-binding protein 2</shortName>
        <shortName>Freud-2</shortName>
    </alternativeName>
</protein>
<organism>
    <name type="scientific">Rattus norvegicus</name>
    <name type="common">Rat</name>
    <dbReference type="NCBI Taxonomy" id="10116"/>
    <lineage>
        <taxon>Eukaryota</taxon>
        <taxon>Metazoa</taxon>
        <taxon>Chordata</taxon>
        <taxon>Craniata</taxon>
        <taxon>Vertebrata</taxon>
        <taxon>Euteleostomi</taxon>
        <taxon>Mammalia</taxon>
        <taxon>Eutheria</taxon>
        <taxon>Euarchontoglires</taxon>
        <taxon>Glires</taxon>
        <taxon>Rodentia</taxon>
        <taxon>Myomorpha</taxon>
        <taxon>Muroidea</taxon>
        <taxon>Muridae</taxon>
        <taxon>Murinae</taxon>
        <taxon>Rattus</taxon>
    </lineage>
</organism>
<proteinExistence type="evidence at protein level"/>
<sequence length="850" mass="93534">MPGPRPRKGPKTSGQGAETAKQLGLFVEFNPEDMLLGMDETEDDGDLEAELLALTGETGSTSRKPAPKGRAPLPMAHIEKLAADCMRDVEEEGEEEEGLEDDADLLTELQEVLGVDEETGLVDDSEETSPDLSEEKTRDNTEQPVAPAAFQQALPAAVAQAGGPRGLQALLEERIQNYREAAASAKEAGEAAKARRCERGLKTLESQLATVRKGGKICEDEIPPPVALGKRPPAHQERPSKDSEIDSAGSCAMDPGDLSQPESSLPAVAALPDSDPDPQALLLARQREYKAAALSAKRAGDLDRARELMRIGKRFGTVLEALEKGQPVDLSGMPPAPEDLKALPQASEASAATQVLSPAVEQMQPVMSSDLPATPAAPAEPKTVLDALQQRLNRYREAGIQARASGDERKARMHDRIAKQYQDAIRAHQAGRKVDFAELPVPPGFPPIPGLEPRKDTEEDSVTATLAAAQKLASEDTALVDEDEERDTPAQAPLAKKPAQPLVPSSHLLNEPKASSSKESLSPSVREQVTLLEARKLQYQRAALQAKRRQDLEQAKSHLRVAKSLEAQIIQARAGQPIDLSKVPSPLTDEEGDFILIHHEDLRLSQKAEEVYAQLQKILLEQHEKCLLFSKQFMHQGNVAETTRFEKLAEDRKKQLEILQLAQAQGLDPPSHHFELKTLQTVRIFSELNSTEMHLIIVRGMNLPAPPGVTPDDLDAFVRFEFHYPNSDQAQKSKTAVVKNTNSPEFEQVFKLNINRNHRGFRRVIQSKGIKFEIFHKGSFFRSDKLVGTAHLKLERLEKECEIREIMEVLDGRKPTGGKLEVKVRLREPLSSQDVQMVTENWLVLEPRGL</sequence>
<evidence type="ECO:0000250" key="1"/>
<evidence type="ECO:0000250" key="2">
    <source>
        <dbReference type="UniProtKB" id="Q5T0F9"/>
    </source>
</evidence>
<evidence type="ECO:0000250" key="3">
    <source>
        <dbReference type="UniProtKB" id="Q8BRN9"/>
    </source>
</evidence>
<evidence type="ECO:0000255" key="4"/>
<evidence type="ECO:0000255" key="5">
    <source>
        <dbReference type="PROSITE-ProRule" id="PRU00041"/>
    </source>
</evidence>
<evidence type="ECO:0000256" key="6">
    <source>
        <dbReference type="SAM" id="MobiDB-lite"/>
    </source>
</evidence>
<evidence type="ECO:0000269" key="7">
    <source>
    </source>
</evidence>
<evidence type="ECO:0000303" key="8">
    <source>
    </source>
</evidence>
<evidence type="ECO:0000305" key="9"/>